<proteinExistence type="evidence at transcript level"/>
<accession>B5DEI4</accession>
<keyword id="KW-0067">ATP-binding</keyword>
<keyword id="KW-0227">DNA damage</keyword>
<keyword id="KW-0234">DNA repair</keyword>
<keyword id="KW-0547">Nucleotide-binding</keyword>
<keyword id="KW-0539">Nucleus</keyword>
<keyword id="KW-1185">Reference proteome</keyword>
<keyword id="KW-0808">Transferase</keyword>
<keyword id="KW-0832">Ubl conjugation</keyword>
<keyword id="KW-0833">Ubl conjugation pathway</keyword>
<reference key="1">
    <citation type="journal article" date="2004" name="Genome Res.">
        <title>The status, quality, and expansion of the NIH full-length cDNA project: the Mammalian Gene Collection (MGC).</title>
        <authorList>
            <consortium name="The MGC Project Team"/>
        </authorList>
    </citation>
    <scope>NUCLEOTIDE SEQUENCE [LARGE SCALE MRNA]</scope>
    <source>
        <tissue>Prostate</tissue>
    </source>
</reference>
<gene>
    <name type="primary">Ube2w</name>
</gene>
<name>UBE2W_RAT</name>
<feature type="chain" id="PRO_0000414631" description="Ubiquitin-conjugating enzyme E2 W">
    <location>
        <begin position="1"/>
        <end position="151"/>
    </location>
</feature>
<feature type="domain" description="UBC core" evidence="3">
    <location>
        <begin position="3"/>
        <end position="151"/>
    </location>
</feature>
<feature type="active site" description="Glycyl thioester intermediate" evidence="3">
    <location>
        <position position="91"/>
    </location>
</feature>
<feature type="cross-link" description="Peptide (Met-Gly) (interchain with G-Cter in ubiquitin)" evidence="2">
    <location>
        <position position="1"/>
    </location>
</feature>
<comment type="function">
    <text evidence="2">Accepts ubiquitin from the E1 complex and catalyzes its covalent attachment to other proteins. Specifically monoubiquitinates the N-terminus of various substrates, including ATXN3, MAPT/TAU, POLR2H/RPB8 and STUB1/CHIP, by recognizing backbone atoms of disordered N-termini. Involved in degradation of misfolded chaperone substrates by mediating monoubiquitination of STUB1/CHIP, leading to recruitment of ATXN3 to monoubiquitinated STUB1/CHIP, and restriction of the length of ubiquitin chain attached to STUB1/CHIP substrates by ATXN3. After UV irradiation, but not after mitomycin-C (MMC) treatment, acts as a specific E2 ubiquitin-conjugating enzyme for the Fanconi anemia complex by associating with E3 ubiquitin-protein ligase FANCL and catalyzing monoubiquitination of FANCD2, a key step in the DNA damage pathway. In vitro catalyzes 'Lys-11'-linked polyubiquitination. UBE2W-catalyzed ubiquitination also occurs in the presence of inactive RING/U-box type E3s, i.e. lacking the active site cysteine residues to form thioester bonds with ubiquitin, or even in the absence of E3, albeit at a slower rate.</text>
</comment>
<comment type="catalytic activity">
    <reaction evidence="2 3">
        <text>S-ubiquitinyl-[E1 ubiquitin-activating enzyme]-L-cysteine + [E2 ubiquitin-conjugating enzyme]-L-cysteine = [E1 ubiquitin-activating enzyme]-L-cysteine + S-ubiquitinyl-[E2 ubiquitin-conjugating enzyme]-L-cysteine.</text>
        <dbReference type="EC" id="2.3.2.23"/>
    </reaction>
</comment>
<comment type="catalytic activity">
    <reaction evidence="2">
        <text>S-ubiquitinyl-[E1 ubiquitin-activating enzyme]-L-cysteine + [acceptor protein]-N-terminal-amino acid = [E1 ubiquitin-activating enzyme]-L-cysteine + N-terminal-ubiquitinyl-[acceptor protein].</text>
        <dbReference type="EC" id="2.3.2.25"/>
    </reaction>
</comment>
<comment type="pathway">
    <text evidence="3">Protein modification; protein ubiquitination.</text>
</comment>
<comment type="subunit">
    <text evidence="1 2">Homodimer. Interacts with FANCL. Interacts with STUB1/CHIP.</text>
</comment>
<comment type="subcellular location">
    <subcellularLocation>
        <location evidence="2">Nucleus</location>
    </subcellularLocation>
    <text evidence="2">In the nucleus, colocalizes with FANCL.</text>
</comment>
<comment type="PTM">
    <text evidence="2">Autoubiquitinated at Met-1.</text>
</comment>
<comment type="similarity">
    <text evidence="3">Belongs to the ubiquitin-conjugating enzyme family.</text>
</comment>
<dbReference type="EC" id="2.3.2.25"/>
<dbReference type="EC" id="2.3.2.23"/>
<dbReference type="EMBL" id="BC168682">
    <property type="protein sequence ID" value="AAI68682.1"/>
    <property type="molecule type" value="mRNA"/>
</dbReference>
<dbReference type="RefSeq" id="NP_001388217.1">
    <property type="nucleotide sequence ID" value="NM_001401288.1"/>
</dbReference>
<dbReference type="RefSeq" id="XP_006237984.2">
    <property type="nucleotide sequence ID" value="XM_006237922.2"/>
</dbReference>
<dbReference type="RefSeq" id="XP_008756764.1">
    <property type="nucleotide sequence ID" value="XM_008758542.2"/>
</dbReference>
<dbReference type="RefSeq" id="XP_008771705.1">
    <property type="nucleotide sequence ID" value="XM_008773483.2"/>
</dbReference>
<dbReference type="SMR" id="B5DEI4"/>
<dbReference type="FunCoup" id="B5DEI4">
    <property type="interactions" value="3846"/>
</dbReference>
<dbReference type="STRING" id="10116.ENSRNOP00000063975"/>
<dbReference type="PhosphoSitePlus" id="B5DEI4"/>
<dbReference type="PaxDb" id="10116-ENSRNOP00000063975"/>
<dbReference type="PeptideAtlas" id="B5DEI4"/>
<dbReference type="GeneID" id="100909445"/>
<dbReference type="AGR" id="RGD:6503620"/>
<dbReference type="RGD" id="6503620">
    <property type="gene designation" value="Ube2w"/>
</dbReference>
<dbReference type="eggNOG" id="KOG0427">
    <property type="taxonomic scope" value="Eukaryota"/>
</dbReference>
<dbReference type="InParanoid" id="B5DEI4"/>
<dbReference type="PhylomeDB" id="B5DEI4"/>
<dbReference type="UniPathway" id="UPA00143"/>
<dbReference type="PRO" id="PR:B5DEI4"/>
<dbReference type="Proteomes" id="UP000002494">
    <property type="component" value="Unplaced"/>
</dbReference>
<dbReference type="GO" id="GO:0005634">
    <property type="term" value="C:nucleus"/>
    <property type="evidence" value="ECO:0000250"/>
    <property type="project" value="UniProtKB"/>
</dbReference>
<dbReference type="GO" id="GO:0005524">
    <property type="term" value="F:ATP binding"/>
    <property type="evidence" value="ECO:0007669"/>
    <property type="project" value="UniProtKB-KW"/>
</dbReference>
<dbReference type="GO" id="GO:0061631">
    <property type="term" value="F:ubiquitin conjugating enzyme activity"/>
    <property type="evidence" value="ECO:0000266"/>
    <property type="project" value="RGD"/>
</dbReference>
<dbReference type="GO" id="GO:0031625">
    <property type="term" value="F:ubiquitin protein ligase binding"/>
    <property type="evidence" value="ECO:0000266"/>
    <property type="project" value="RGD"/>
</dbReference>
<dbReference type="GO" id="GO:0004842">
    <property type="term" value="F:ubiquitin-protein transferase activity"/>
    <property type="evidence" value="ECO:0000250"/>
    <property type="project" value="UniProtKB"/>
</dbReference>
<dbReference type="GO" id="GO:0140374">
    <property type="term" value="P:antiviral innate immune response"/>
    <property type="evidence" value="ECO:0000266"/>
    <property type="project" value="RGD"/>
</dbReference>
<dbReference type="GO" id="GO:0071218">
    <property type="term" value="P:cellular response to misfolded protein"/>
    <property type="evidence" value="ECO:0000250"/>
    <property type="project" value="UniProtKB"/>
</dbReference>
<dbReference type="GO" id="GO:0006281">
    <property type="term" value="P:DNA repair"/>
    <property type="evidence" value="ECO:0007669"/>
    <property type="project" value="UniProtKB-KW"/>
</dbReference>
<dbReference type="GO" id="GO:1904262">
    <property type="term" value="P:negative regulation of TORC1 signaling"/>
    <property type="evidence" value="ECO:0000266"/>
    <property type="project" value="RGD"/>
</dbReference>
<dbReference type="GO" id="GO:0043161">
    <property type="term" value="P:proteasome-mediated ubiquitin-dependent protein catabolic process"/>
    <property type="evidence" value="ECO:0000250"/>
    <property type="project" value="UniProtKB"/>
</dbReference>
<dbReference type="GO" id="GO:0070979">
    <property type="term" value="P:protein K11-linked ubiquitination"/>
    <property type="evidence" value="ECO:0000266"/>
    <property type="project" value="RGD"/>
</dbReference>
<dbReference type="GO" id="GO:0006513">
    <property type="term" value="P:protein monoubiquitination"/>
    <property type="evidence" value="ECO:0000250"/>
    <property type="project" value="UniProtKB"/>
</dbReference>
<dbReference type="GO" id="GO:0000209">
    <property type="term" value="P:protein polyubiquitination"/>
    <property type="evidence" value="ECO:0000318"/>
    <property type="project" value="GO_Central"/>
</dbReference>
<dbReference type="GO" id="GO:0006515">
    <property type="term" value="P:protein quality control for misfolded or incompletely synthesized proteins"/>
    <property type="evidence" value="ECO:0000250"/>
    <property type="project" value="UniProtKB"/>
</dbReference>
<dbReference type="CDD" id="cd23808">
    <property type="entry name" value="UBCc_UBE2W"/>
    <property type="match status" value="1"/>
</dbReference>
<dbReference type="FunFam" id="3.10.110.10:FF:000022">
    <property type="entry name" value="Ubiquitin-conjugating enzyme E2 W"/>
    <property type="match status" value="1"/>
</dbReference>
<dbReference type="Gene3D" id="3.10.110.10">
    <property type="entry name" value="Ubiquitin Conjugating Enzyme"/>
    <property type="match status" value="1"/>
</dbReference>
<dbReference type="InterPro" id="IPR050113">
    <property type="entry name" value="Ub_conjugating_enzyme"/>
</dbReference>
<dbReference type="InterPro" id="IPR000608">
    <property type="entry name" value="UBQ-conjugat_E2_core"/>
</dbReference>
<dbReference type="InterPro" id="IPR016135">
    <property type="entry name" value="UBQ-conjugating_enzyme/RWD"/>
</dbReference>
<dbReference type="PANTHER" id="PTHR24067">
    <property type="entry name" value="UBIQUITIN-CONJUGATING ENZYME E2"/>
    <property type="match status" value="1"/>
</dbReference>
<dbReference type="Pfam" id="PF00179">
    <property type="entry name" value="UQ_con"/>
    <property type="match status" value="1"/>
</dbReference>
<dbReference type="SMART" id="SM00212">
    <property type="entry name" value="UBCc"/>
    <property type="match status" value="1"/>
</dbReference>
<dbReference type="SUPFAM" id="SSF54495">
    <property type="entry name" value="UBC-like"/>
    <property type="match status" value="1"/>
</dbReference>
<dbReference type="PROSITE" id="PS50127">
    <property type="entry name" value="UBC_2"/>
    <property type="match status" value="1"/>
</dbReference>
<protein>
    <recommendedName>
        <fullName>Ubiquitin-conjugating enzyme E2 W</fullName>
        <ecNumber>2.3.2.25</ecNumber>
    </recommendedName>
    <alternativeName>
        <fullName>E2 ubiquitin-conjugating enzyme W</fullName>
    </alternativeName>
    <alternativeName>
        <fullName>N-terminal E2 ubiquitin-conjugating enzyme</fullName>
        <ecNumber>2.3.2.23</ecNumber>
    </alternativeName>
    <alternativeName>
        <fullName>N-terminus-conjugating E2</fullName>
    </alternativeName>
    <alternativeName>
        <fullName>Ubiquitin carrier protein W</fullName>
    </alternativeName>
    <alternativeName>
        <fullName>Ubiquitin-protein ligase W</fullName>
    </alternativeName>
</protein>
<sequence length="151" mass="17331">MASMQKRLQKELLALQNDPPPGMTLNEKSVQNSITQWIVDMEGAPGTLYEGEKFQLLFKFSSRYPFDSPQVMFTGENIPVHPHVYSNGHICLSILTEDWSPALSVQSVCLSIISMLSSCKEKRRPPDNSFYVRTCNKNPKKTKWWYHDDTC</sequence>
<organism>
    <name type="scientific">Rattus norvegicus</name>
    <name type="common">Rat</name>
    <dbReference type="NCBI Taxonomy" id="10116"/>
    <lineage>
        <taxon>Eukaryota</taxon>
        <taxon>Metazoa</taxon>
        <taxon>Chordata</taxon>
        <taxon>Craniata</taxon>
        <taxon>Vertebrata</taxon>
        <taxon>Euteleostomi</taxon>
        <taxon>Mammalia</taxon>
        <taxon>Eutheria</taxon>
        <taxon>Euarchontoglires</taxon>
        <taxon>Glires</taxon>
        <taxon>Rodentia</taxon>
        <taxon>Myomorpha</taxon>
        <taxon>Muroidea</taxon>
        <taxon>Muridae</taxon>
        <taxon>Murinae</taxon>
        <taxon>Rattus</taxon>
    </lineage>
</organism>
<evidence type="ECO:0000250" key="1">
    <source>
        <dbReference type="UniProtKB" id="Q8VDW4"/>
    </source>
</evidence>
<evidence type="ECO:0000250" key="2">
    <source>
        <dbReference type="UniProtKB" id="Q96B02"/>
    </source>
</evidence>
<evidence type="ECO:0000255" key="3">
    <source>
        <dbReference type="PROSITE-ProRule" id="PRU00388"/>
    </source>
</evidence>